<protein>
    <recommendedName>
        <fullName evidence="1">5'-nucleotidase SurE</fullName>
        <ecNumber evidence="1">3.1.3.5</ecNumber>
    </recommendedName>
    <alternativeName>
        <fullName evidence="1">Nucleoside 5'-monophosphate phosphohydrolase</fullName>
    </alternativeName>
</protein>
<sequence>MIVALTNDDGIQAPGLRAMYKALLDAGHEVHVVAPVTEQSAVGHAVTISLPLRVKEFHENGFRGRGVYGTPTDCVKLGLSCLLDKKPDVVVSGINAGANVGPDILYSGTVSAATEAAHMGYPALAVSYDSFRPADLSGQAAHAAGLLATLDWQALPARCVVNLNYPAVPMPEVKGVRACPQTRAVWKDWYDHRTDPRGGSYWWLNGVIPPETVAPGTDRALLTEGWITLTPLRFDFTDHEAMDVLARVQGDGVGGQANAQTGGQTGGGI</sequence>
<feature type="chain" id="PRO_1000196595" description="5'-nucleotidase SurE">
    <location>
        <begin position="1"/>
        <end position="269"/>
    </location>
</feature>
<feature type="binding site" evidence="1">
    <location>
        <position position="8"/>
    </location>
    <ligand>
        <name>a divalent metal cation</name>
        <dbReference type="ChEBI" id="CHEBI:60240"/>
    </ligand>
</feature>
<feature type="binding site" evidence="1">
    <location>
        <position position="9"/>
    </location>
    <ligand>
        <name>a divalent metal cation</name>
        <dbReference type="ChEBI" id="CHEBI:60240"/>
    </ligand>
</feature>
<feature type="binding site" evidence="1">
    <location>
        <position position="40"/>
    </location>
    <ligand>
        <name>a divalent metal cation</name>
        <dbReference type="ChEBI" id="CHEBI:60240"/>
    </ligand>
</feature>
<feature type="binding site" evidence="1">
    <location>
        <position position="95"/>
    </location>
    <ligand>
        <name>a divalent metal cation</name>
        <dbReference type="ChEBI" id="CHEBI:60240"/>
    </ligand>
</feature>
<name>SURE_NITV9</name>
<dbReference type="EC" id="3.1.3.5" evidence="1"/>
<dbReference type="EMBL" id="CP001197">
    <property type="protein sequence ID" value="ACL06983.1"/>
    <property type="molecule type" value="Genomic_DNA"/>
</dbReference>
<dbReference type="SMR" id="B8DN39"/>
<dbReference type="STRING" id="883.DvMF_0021"/>
<dbReference type="KEGG" id="dvm:DvMF_0021"/>
<dbReference type="eggNOG" id="COG0496">
    <property type="taxonomic scope" value="Bacteria"/>
</dbReference>
<dbReference type="HOGENOM" id="CLU_045192_1_2_7"/>
<dbReference type="OrthoDB" id="9780815at2"/>
<dbReference type="GO" id="GO:0005737">
    <property type="term" value="C:cytoplasm"/>
    <property type="evidence" value="ECO:0007669"/>
    <property type="project" value="UniProtKB-SubCell"/>
</dbReference>
<dbReference type="GO" id="GO:0008253">
    <property type="term" value="F:5'-nucleotidase activity"/>
    <property type="evidence" value="ECO:0007669"/>
    <property type="project" value="UniProtKB-UniRule"/>
</dbReference>
<dbReference type="GO" id="GO:0046872">
    <property type="term" value="F:metal ion binding"/>
    <property type="evidence" value="ECO:0007669"/>
    <property type="project" value="UniProtKB-UniRule"/>
</dbReference>
<dbReference type="GO" id="GO:0000166">
    <property type="term" value="F:nucleotide binding"/>
    <property type="evidence" value="ECO:0007669"/>
    <property type="project" value="UniProtKB-KW"/>
</dbReference>
<dbReference type="Gene3D" id="3.40.1210.10">
    <property type="entry name" value="Survival protein SurE-like phosphatase/nucleotidase"/>
    <property type="match status" value="1"/>
</dbReference>
<dbReference type="HAMAP" id="MF_00060">
    <property type="entry name" value="SurE"/>
    <property type="match status" value="1"/>
</dbReference>
<dbReference type="InterPro" id="IPR030048">
    <property type="entry name" value="SurE"/>
</dbReference>
<dbReference type="InterPro" id="IPR002828">
    <property type="entry name" value="SurE-like_Pase/nucleotidase"/>
</dbReference>
<dbReference type="InterPro" id="IPR036523">
    <property type="entry name" value="SurE-like_sf"/>
</dbReference>
<dbReference type="NCBIfam" id="NF001490">
    <property type="entry name" value="PRK00346.1-4"/>
    <property type="match status" value="1"/>
</dbReference>
<dbReference type="NCBIfam" id="TIGR00087">
    <property type="entry name" value="surE"/>
    <property type="match status" value="1"/>
</dbReference>
<dbReference type="PANTHER" id="PTHR30457">
    <property type="entry name" value="5'-NUCLEOTIDASE SURE"/>
    <property type="match status" value="1"/>
</dbReference>
<dbReference type="PANTHER" id="PTHR30457:SF0">
    <property type="entry name" value="PHOSPHATASE, PUTATIVE (AFU_ORTHOLOGUE AFUA_4G01070)-RELATED"/>
    <property type="match status" value="1"/>
</dbReference>
<dbReference type="Pfam" id="PF01975">
    <property type="entry name" value="SurE"/>
    <property type="match status" value="1"/>
</dbReference>
<dbReference type="SUPFAM" id="SSF64167">
    <property type="entry name" value="SurE-like"/>
    <property type="match status" value="1"/>
</dbReference>
<keyword id="KW-0963">Cytoplasm</keyword>
<keyword id="KW-0378">Hydrolase</keyword>
<keyword id="KW-0479">Metal-binding</keyword>
<keyword id="KW-0547">Nucleotide-binding</keyword>
<accession>B8DN39</accession>
<comment type="function">
    <text evidence="1">Nucleotidase that shows phosphatase activity on nucleoside 5'-monophosphates.</text>
</comment>
<comment type="catalytic activity">
    <reaction evidence="1">
        <text>a ribonucleoside 5'-phosphate + H2O = a ribonucleoside + phosphate</text>
        <dbReference type="Rhea" id="RHEA:12484"/>
        <dbReference type="ChEBI" id="CHEBI:15377"/>
        <dbReference type="ChEBI" id="CHEBI:18254"/>
        <dbReference type="ChEBI" id="CHEBI:43474"/>
        <dbReference type="ChEBI" id="CHEBI:58043"/>
        <dbReference type="EC" id="3.1.3.5"/>
    </reaction>
</comment>
<comment type="cofactor">
    <cofactor evidence="1">
        <name>a divalent metal cation</name>
        <dbReference type="ChEBI" id="CHEBI:60240"/>
    </cofactor>
    <text evidence="1">Binds 1 divalent metal cation per subunit.</text>
</comment>
<comment type="subcellular location">
    <subcellularLocation>
        <location evidence="1">Cytoplasm</location>
    </subcellularLocation>
</comment>
<comment type="similarity">
    <text evidence="1">Belongs to the SurE nucleotidase family.</text>
</comment>
<proteinExistence type="inferred from homology"/>
<organism>
    <name type="scientific">Nitratidesulfovibrio vulgaris (strain DSM 19637 / Miyazaki F)</name>
    <name type="common">Desulfovibrio vulgaris</name>
    <dbReference type="NCBI Taxonomy" id="883"/>
    <lineage>
        <taxon>Bacteria</taxon>
        <taxon>Pseudomonadati</taxon>
        <taxon>Thermodesulfobacteriota</taxon>
        <taxon>Desulfovibrionia</taxon>
        <taxon>Desulfovibrionales</taxon>
        <taxon>Desulfovibrionaceae</taxon>
        <taxon>Nitratidesulfovibrio</taxon>
    </lineage>
</organism>
<gene>
    <name evidence="1" type="primary">surE</name>
    <name type="ordered locus">DvMF_0021</name>
</gene>
<evidence type="ECO:0000255" key="1">
    <source>
        <dbReference type="HAMAP-Rule" id="MF_00060"/>
    </source>
</evidence>
<reference key="1">
    <citation type="submission" date="2008-10" db="EMBL/GenBank/DDBJ databases">
        <title>Complete sequence of Desulfovibrio vulgaris str. 'Miyazaki F'.</title>
        <authorList>
            <person name="Lucas S."/>
            <person name="Copeland A."/>
            <person name="Lapidus A."/>
            <person name="Glavina del Rio T."/>
            <person name="Dalin E."/>
            <person name="Tice H."/>
            <person name="Bruce D."/>
            <person name="Goodwin L."/>
            <person name="Pitluck S."/>
            <person name="Sims D."/>
            <person name="Brettin T."/>
            <person name="Detter J.C."/>
            <person name="Han C."/>
            <person name="Larimer F."/>
            <person name="Land M."/>
            <person name="Hauser L."/>
            <person name="Kyrpides N."/>
            <person name="Mikhailova N."/>
            <person name="Hazen T.C."/>
            <person name="Richardson P."/>
        </authorList>
    </citation>
    <scope>NUCLEOTIDE SEQUENCE [LARGE SCALE GENOMIC DNA]</scope>
    <source>
        <strain>DSM 19637 / Miyazaki F</strain>
    </source>
</reference>